<dbReference type="EC" id="6.3.5.2"/>
<dbReference type="EMBL" id="LT708304">
    <property type="protein sequence ID" value="SIU02058.1"/>
    <property type="molecule type" value="Genomic_DNA"/>
</dbReference>
<dbReference type="RefSeq" id="NP_857070.1">
    <property type="nucleotide sequence ID" value="NC_002945.3"/>
</dbReference>
<dbReference type="RefSeq" id="WP_003417952.1">
    <property type="nucleotide sequence ID" value="NC_002945.4"/>
</dbReference>
<dbReference type="SMR" id="P0A5A2"/>
<dbReference type="GeneID" id="45427392"/>
<dbReference type="KEGG" id="mbo:BQ2027_MB3429C"/>
<dbReference type="PATRIC" id="fig|233413.5.peg.3764"/>
<dbReference type="UniPathway" id="UPA00189">
    <property type="reaction ID" value="UER00296"/>
</dbReference>
<dbReference type="Proteomes" id="UP000001419">
    <property type="component" value="Chromosome"/>
</dbReference>
<dbReference type="GO" id="GO:0005829">
    <property type="term" value="C:cytosol"/>
    <property type="evidence" value="ECO:0007669"/>
    <property type="project" value="TreeGrafter"/>
</dbReference>
<dbReference type="GO" id="GO:0005524">
    <property type="term" value="F:ATP binding"/>
    <property type="evidence" value="ECO:0007669"/>
    <property type="project" value="UniProtKB-UniRule"/>
</dbReference>
<dbReference type="GO" id="GO:0003921">
    <property type="term" value="F:GMP synthase activity"/>
    <property type="evidence" value="ECO:0007669"/>
    <property type="project" value="InterPro"/>
</dbReference>
<dbReference type="CDD" id="cd01742">
    <property type="entry name" value="GATase1_GMP_Synthase"/>
    <property type="match status" value="1"/>
</dbReference>
<dbReference type="CDD" id="cd01997">
    <property type="entry name" value="GMP_synthase_C"/>
    <property type="match status" value="1"/>
</dbReference>
<dbReference type="FunFam" id="3.30.300.10:FF:000002">
    <property type="entry name" value="GMP synthase [glutamine-hydrolyzing]"/>
    <property type="match status" value="1"/>
</dbReference>
<dbReference type="FunFam" id="3.40.50.620:FF:000001">
    <property type="entry name" value="GMP synthase [glutamine-hydrolyzing]"/>
    <property type="match status" value="1"/>
</dbReference>
<dbReference type="FunFam" id="3.40.50.880:FF:000001">
    <property type="entry name" value="GMP synthase [glutamine-hydrolyzing]"/>
    <property type="match status" value="1"/>
</dbReference>
<dbReference type="Gene3D" id="3.30.300.10">
    <property type="match status" value="1"/>
</dbReference>
<dbReference type="Gene3D" id="3.40.50.880">
    <property type="match status" value="1"/>
</dbReference>
<dbReference type="Gene3D" id="3.40.50.620">
    <property type="entry name" value="HUPs"/>
    <property type="match status" value="1"/>
</dbReference>
<dbReference type="HAMAP" id="MF_00344">
    <property type="entry name" value="GMP_synthase"/>
    <property type="match status" value="1"/>
</dbReference>
<dbReference type="InterPro" id="IPR029062">
    <property type="entry name" value="Class_I_gatase-like"/>
</dbReference>
<dbReference type="InterPro" id="IPR017926">
    <property type="entry name" value="GATASE"/>
</dbReference>
<dbReference type="InterPro" id="IPR001674">
    <property type="entry name" value="GMP_synth_C"/>
</dbReference>
<dbReference type="InterPro" id="IPR004739">
    <property type="entry name" value="GMP_synth_GATase"/>
</dbReference>
<dbReference type="InterPro" id="IPR022955">
    <property type="entry name" value="GMP_synthase"/>
</dbReference>
<dbReference type="InterPro" id="IPR025777">
    <property type="entry name" value="GMPS_ATP_PPase_dom"/>
</dbReference>
<dbReference type="InterPro" id="IPR022310">
    <property type="entry name" value="NAD/GMP_synthase"/>
</dbReference>
<dbReference type="InterPro" id="IPR014729">
    <property type="entry name" value="Rossmann-like_a/b/a_fold"/>
</dbReference>
<dbReference type="NCBIfam" id="TIGR00884">
    <property type="entry name" value="guaA_Cterm"/>
    <property type="match status" value="1"/>
</dbReference>
<dbReference type="NCBIfam" id="TIGR00888">
    <property type="entry name" value="guaA_Nterm"/>
    <property type="match status" value="1"/>
</dbReference>
<dbReference type="NCBIfam" id="NF000848">
    <property type="entry name" value="PRK00074.1"/>
    <property type="match status" value="1"/>
</dbReference>
<dbReference type="PANTHER" id="PTHR11922:SF2">
    <property type="entry name" value="GMP SYNTHASE [GLUTAMINE-HYDROLYZING]"/>
    <property type="match status" value="1"/>
</dbReference>
<dbReference type="PANTHER" id="PTHR11922">
    <property type="entry name" value="GMP SYNTHASE-RELATED"/>
    <property type="match status" value="1"/>
</dbReference>
<dbReference type="Pfam" id="PF00117">
    <property type="entry name" value="GATase"/>
    <property type="match status" value="1"/>
</dbReference>
<dbReference type="Pfam" id="PF00958">
    <property type="entry name" value="GMP_synt_C"/>
    <property type="match status" value="1"/>
</dbReference>
<dbReference type="Pfam" id="PF02540">
    <property type="entry name" value="NAD_synthase"/>
    <property type="match status" value="1"/>
</dbReference>
<dbReference type="PRINTS" id="PR00097">
    <property type="entry name" value="ANTSNTHASEII"/>
</dbReference>
<dbReference type="PRINTS" id="PR00099">
    <property type="entry name" value="CPSGATASE"/>
</dbReference>
<dbReference type="PRINTS" id="PR00096">
    <property type="entry name" value="GATASE"/>
</dbReference>
<dbReference type="SUPFAM" id="SSF52402">
    <property type="entry name" value="Adenine nucleotide alpha hydrolases-like"/>
    <property type="match status" value="1"/>
</dbReference>
<dbReference type="SUPFAM" id="SSF52317">
    <property type="entry name" value="Class I glutamine amidotransferase-like"/>
    <property type="match status" value="1"/>
</dbReference>
<dbReference type="SUPFAM" id="SSF54810">
    <property type="entry name" value="GMP synthetase C-terminal dimerisation domain"/>
    <property type="match status" value="1"/>
</dbReference>
<dbReference type="PROSITE" id="PS51273">
    <property type="entry name" value="GATASE_TYPE_1"/>
    <property type="match status" value="1"/>
</dbReference>
<dbReference type="PROSITE" id="PS51553">
    <property type="entry name" value="GMPS_ATP_PPASE"/>
    <property type="match status" value="1"/>
</dbReference>
<evidence type="ECO:0000250" key="1"/>
<name>GUAA_MYCBO</name>
<feature type="chain" id="PRO_0000140150" description="GMP synthase [glutamine-hydrolyzing]">
    <location>
        <begin position="1"/>
        <end position="525"/>
    </location>
</feature>
<feature type="domain" description="Glutamine amidotransferase type-1">
    <location>
        <begin position="16"/>
        <end position="205"/>
    </location>
</feature>
<feature type="domain" description="GMPS ATP-PPase">
    <location>
        <begin position="206"/>
        <end position="399"/>
    </location>
</feature>
<feature type="active site" description="Nucleophile" evidence="1">
    <location>
        <position position="93"/>
    </location>
</feature>
<feature type="active site" evidence="1">
    <location>
        <position position="179"/>
    </location>
</feature>
<feature type="active site" evidence="1">
    <location>
        <position position="181"/>
    </location>
</feature>
<feature type="binding site" evidence="1">
    <location>
        <begin position="233"/>
        <end position="239"/>
    </location>
    <ligand>
        <name>ATP</name>
        <dbReference type="ChEBI" id="CHEBI:30616"/>
    </ligand>
</feature>
<comment type="function">
    <text evidence="1">Catalyzes the synthesis of GMP from XMP.</text>
</comment>
<comment type="catalytic activity">
    <reaction>
        <text>XMP + L-glutamine + ATP + H2O = GMP + L-glutamate + AMP + diphosphate + 2 H(+)</text>
        <dbReference type="Rhea" id="RHEA:11680"/>
        <dbReference type="ChEBI" id="CHEBI:15377"/>
        <dbReference type="ChEBI" id="CHEBI:15378"/>
        <dbReference type="ChEBI" id="CHEBI:29985"/>
        <dbReference type="ChEBI" id="CHEBI:30616"/>
        <dbReference type="ChEBI" id="CHEBI:33019"/>
        <dbReference type="ChEBI" id="CHEBI:57464"/>
        <dbReference type="ChEBI" id="CHEBI:58115"/>
        <dbReference type="ChEBI" id="CHEBI:58359"/>
        <dbReference type="ChEBI" id="CHEBI:456215"/>
        <dbReference type="EC" id="6.3.5.2"/>
    </reaction>
</comment>
<comment type="pathway">
    <text>Purine metabolism; GMP biosynthesis; GMP from XMP (L-Gln route): step 1/1.</text>
</comment>
<comment type="subunit">
    <text evidence="1">Homodimer.</text>
</comment>
<sequence length="525" mass="56060">MVQPADIDVPETPARPVLVVDFGAQYAQLIARRVREARVFSEVIPHTASIEEIRARQPVALVLSGGPASVYADGAPKLDPALLDLGVPVLGICYGFQAMAQALGGIVAHTGTREYGRTELKVLGGKLHSDLPEVQPVWMSHGDAVTAAPDGFDVVASSAGAPVAAFEAFDRRLAGVQYHPEVMHTPHGQQVLSRFLHDFAGLGAQWTPANIANALIEQVRTQIGDGHAICGLSGGVDSAVAAALVQRAIGDRLTCVFVDHGLLRAGERAQVQRDFVAATGANLVTVDAAETFLEALSGVSAPEGKRKIIGRQFIRAFEGAVRDVLDGKTAEFLVQGTLYPDVVESGGGSGTANIKSHHNVGGLPDDLKFTLVEPLRLLFKDEVRAVGRELGLPEEIVARQPFPGPGLGIRIVGEVTAKRLDTLRHADSIVREELTAAGLDNQIWQCPVVLLADVRSVGVQGDGRTYGHPIVLRPVSSEDAMTADWTRVPYEVLERISTRITNEVAEVNRVVLDITSKPPATIEWE</sequence>
<proteinExistence type="inferred from homology"/>
<protein>
    <recommendedName>
        <fullName>GMP synthase [glutamine-hydrolyzing]</fullName>
        <ecNumber>6.3.5.2</ecNumber>
    </recommendedName>
    <alternativeName>
        <fullName>GMP synthetase</fullName>
    </alternativeName>
    <alternativeName>
        <fullName>Glutamine amidotransferase</fullName>
    </alternativeName>
</protein>
<gene>
    <name type="primary">guaA</name>
    <name type="ordered locus">BQ2027_MB3429C</name>
</gene>
<accession>P0A5A2</accession>
<accession>A0A1R3Y480</accession>
<accession>Q50729</accession>
<accession>X2BPF9</accession>
<keyword id="KW-0067">ATP-binding</keyword>
<keyword id="KW-0315">Glutamine amidotransferase</keyword>
<keyword id="KW-0332">GMP biosynthesis</keyword>
<keyword id="KW-0436">Ligase</keyword>
<keyword id="KW-0547">Nucleotide-binding</keyword>
<keyword id="KW-0658">Purine biosynthesis</keyword>
<keyword id="KW-1185">Reference proteome</keyword>
<organism>
    <name type="scientific">Mycobacterium bovis (strain ATCC BAA-935 / AF2122/97)</name>
    <dbReference type="NCBI Taxonomy" id="233413"/>
    <lineage>
        <taxon>Bacteria</taxon>
        <taxon>Bacillati</taxon>
        <taxon>Actinomycetota</taxon>
        <taxon>Actinomycetes</taxon>
        <taxon>Mycobacteriales</taxon>
        <taxon>Mycobacteriaceae</taxon>
        <taxon>Mycobacterium</taxon>
        <taxon>Mycobacterium tuberculosis complex</taxon>
    </lineage>
</organism>
<reference key="1">
    <citation type="journal article" date="2003" name="Proc. Natl. Acad. Sci. U.S.A.">
        <title>The complete genome sequence of Mycobacterium bovis.</title>
        <authorList>
            <person name="Garnier T."/>
            <person name="Eiglmeier K."/>
            <person name="Camus J.-C."/>
            <person name="Medina N."/>
            <person name="Mansoor H."/>
            <person name="Pryor M."/>
            <person name="Duthoy S."/>
            <person name="Grondin S."/>
            <person name="Lacroix C."/>
            <person name="Monsempe C."/>
            <person name="Simon S."/>
            <person name="Harris B."/>
            <person name="Atkin R."/>
            <person name="Doggett J."/>
            <person name="Mayes R."/>
            <person name="Keating L."/>
            <person name="Wheeler P.R."/>
            <person name="Parkhill J."/>
            <person name="Barrell B.G."/>
            <person name="Cole S.T."/>
            <person name="Gordon S.V."/>
            <person name="Hewinson R.G."/>
        </authorList>
    </citation>
    <scope>NUCLEOTIDE SEQUENCE [LARGE SCALE GENOMIC DNA]</scope>
    <source>
        <strain>ATCC BAA-935 / AF2122/97</strain>
    </source>
</reference>
<reference key="2">
    <citation type="journal article" date="2017" name="Genome Announc.">
        <title>Updated reference genome sequence and annotation of Mycobacterium bovis AF2122/97.</title>
        <authorList>
            <person name="Malone K.M."/>
            <person name="Farrell D."/>
            <person name="Stuber T.P."/>
            <person name="Schubert O.T."/>
            <person name="Aebersold R."/>
            <person name="Robbe-Austerman S."/>
            <person name="Gordon S.V."/>
        </authorList>
    </citation>
    <scope>NUCLEOTIDE SEQUENCE [LARGE SCALE GENOMIC DNA]</scope>
    <scope>GENOME REANNOTATION</scope>
    <source>
        <strain>ATCC BAA-935 / AF2122/97</strain>
    </source>
</reference>